<feature type="chain" id="PRO_0000211025" description="UBX domain-containing protein 6">
    <location>
        <begin position="1"/>
        <end position="441"/>
    </location>
</feature>
<feature type="domain" description="PUB" evidence="1">
    <location>
        <begin position="175"/>
        <end position="244"/>
    </location>
</feature>
<feature type="domain" description="UBX" evidence="2">
    <location>
        <begin position="332"/>
        <end position="408"/>
    </location>
</feature>
<feature type="region of interest" description="Mediates interaction with LMAN1" evidence="9">
    <location>
        <begin position="1"/>
        <end position="10"/>
    </location>
</feature>
<feature type="region of interest" description="Disordered" evidence="3">
    <location>
        <begin position="13"/>
        <end position="79"/>
    </location>
</feature>
<feature type="region of interest" description="VCP/p97-interacting motif (VIM)" evidence="8">
    <location>
        <begin position="51"/>
        <end position="63"/>
    </location>
</feature>
<feature type="region of interest" description="Disordered" evidence="3">
    <location>
        <begin position="87"/>
        <end position="106"/>
    </location>
</feature>
<feature type="compositionally biased region" description="Basic and acidic residues" evidence="3">
    <location>
        <begin position="22"/>
        <end position="36"/>
    </location>
</feature>
<feature type="compositionally biased region" description="Low complexity" evidence="3">
    <location>
        <begin position="52"/>
        <end position="61"/>
    </location>
</feature>
<feature type="modified residue" description="Phosphoserine" evidence="20">
    <location>
        <position position="96"/>
    </location>
</feature>
<feature type="splice variant" id="VSP_007453" description="In isoform 2." evidence="15 16">
    <location>
        <begin position="1"/>
        <end position="53"/>
    </location>
</feature>
<feature type="sequence variant" id="VAR_061924" description="In dbSNP:rs1127888.">
    <original>A</original>
    <variation>T</variation>
    <location>
        <position position="31"/>
    </location>
</feature>
<feature type="sequence variant" id="VAR_047821" description="In dbSNP:rs35436704.">
    <original>P</original>
    <variation>L</variation>
    <location>
        <position position="425"/>
    </location>
</feature>
<feature type="helix" evidence="22">
    <location>
        <begin position="50"/>
        <end position="67"/>
    </location>
</feature>
<feature type="helix" evidence="24">
    <location>
        <begin position="76"/>
        <end position="92"/>
    </location>
</feature>
<feature type="strand" evidence="21">
    <location>
        <begin position="122"/>
        <end position="124"/>
    </location>
</feature>
<feature type="turn" evidence="21">
    <location>
        <begin position="126"/>
        <end position="128"/>
    </location>
</feature>
<feature type="strand" evidence="21">
    <location>
        <begin position="131"/>
        <end position="133"/>
    </location>
</feature>
<feature type="turn" evidence="21">
    <location>
        <begin position="134"/>
        <end position="136"/>
    </location>
</feature>
<feature type="helix" evidence="21">
    <location>
        <begin position="137"/>
        <end position="148"/>
    </location>
</feature>
<feature type="turn" evidence="21">
    <location>
        <begin position="149"/>
        <end position="151"/>
    </location>
</feature>
<feature type="helix" evidence="21">
    <location>
        <begin position="153"/>
        <end position="164"/>
    </location>
</feature>
<feature type="helix" evidence="21">
    <location>
        <begin position="168"/>
        <end position="187"/>
    </location>
</feature>
<feature type="helix" evidence="21">
    <location>
        <begin position="192"/>
        <end position="194"/>
    </location>
</feature>
<feature type="strand" evidence="21">
    <location>
        <begin position="195"/>
        <end position="198"/>
    </location>
</feature>
<feature type="helix" evidence="21">
    <location>
        <begin position="202"/>
        <end position="207"/>
    </location>
</feature>
<feature type="turn" evidence="21">
    <location>
        <begin position="208"/>
        <end position="210"/>
    </location>
</feature>
<feature type="helix" evidence="21">
    <location>
        <begin position="214"/>
        <end position="220"/>
    </location>
</feature>
<feature type="strand" evidence="21">
    <location>
        <begin position="223"/>
        <end position="228"/>
    </location>
</feature>
<feature type="strand" evidence="21">
    <location>
        <begin position="237"/>
        <end position="242"/>
    </location>
</feature>
<feature type="helix" evidence="21">
    <location>
        <begin position="244"/>
        <end position="247"/>
    </location>
</feature>
<feature type="helix" evidence="21">
    <location>
        <begin position="251"/>
        <end position="261"/>
    </location>
</feature>
<feature type="strand" evidence="21">
    <location>
        <begin position="275"/>
        <end position="278"/>
    </location>
</feature>
<feature type="helix" evidence="21">
    <location>
        <begin position="281"/>
        <end position="284"/>
    </location>
</feature>
<feature type="turn" evidence="21">
    <location>
        <begin position="290"/>
        <end position="293"/>
    </location>
</feature>
<feature type="helix" evidence="21">
    <location>
        <begin position="297"/>
        <end position="315"/>
    </location>
</feature>
<feature type="helix" evidence="21">
    <location>
        <begin position="320"/>
        <end position="327"/>
    </location>
</feature>
<feature type="helix" evidence="21">
    <location>
        <begin position="328"/>
        <end position="330"/>
    </location>
</feature>
<feature type="strand" evidence="21">
    <location>
        <begin position="335"/>
        <end position="342"/>
    </location>
</feature>
<feature type="strand" evidence="21">
    <location>
        <begin position="348"/>
        <end position="354"/>
    </location>
</feature>
<feature type="helix" evidence="21">
    <location>
        <begin position="359"/>
        <end position="369"/>
    </location>
</feature>
<feature type="strand" evidence="23">
    <location>
        <begin position="370"/>
        <end position="372"/>
    </location>
</feature>
<feature type="strand" evidence="21">
    <location>
        <begin position="377"/>
        <end position="380"/>
    </location>
</feature>
<feature type="helix" evidence="21">
    <location>
        <begin position="395"/>
        <end position="398"/>
    </location>
</feature>
<feature type="strand" evidence="21">
    <location>
        <begin position="402"/>
        <end position="410"/>
    </location>
</feature>
<feature type="helix" evidence="21">
    <location>
        <begin position="412"/>
        <end position="420"/>
    </location>
</feature>
<feature type="helix" evidence="21">
    <location>
        <begin position="431"/>
        <end position="434"/>
    </location>
</feature>
<feature type="strand" evidence="23">
    <location>
        <begin position="438"/>
        <end position="440"/>
    </location>
</feature>
<feature type="initiator methionine" description="Removed" evidence="14">
    <location sequence="Q9BZV1-2">
        <position position="1"/>
    </location>
</feature>
<feature type="modified residue" description="N-acetylalanine" evidence="14">
    <location sequence="Q9BZV1-2">
        <position position="2"/>
    </location>
</feature>
<sequence length="441" mass="49754">MKKFFQEFKADIKFKSAGPGQKLKESVGEKAHKEKPNQPAPRPPRQGPTNEAQMAAAAALARLEQKQSRAWGPTSQDTIRNQVRKELQAEATVSGSPEAPGTNVVSEPREEGSAHLAVPGVYFTCPLTGATLRKDQRDACIKEAILLHFSTDPVAASIMKIYTFNKDQDRVKLGVDTIAKYLDNIHLHPEEEKYRKIKLQNKVFQERINCLEGTHEFFEAIGFQKVLLPAQDQEDPEEFYVLSETTLAQPQSLERHKEQLLAAEPVRAKLDRQRRVFQPSPLASQFELPGDFFNLTAEEIKREQRLRSEAVERLSVLRTKAMREKEEQRGLRKYNYTLLRVRLPDGCLLQGTFYARERLGAVYGFVREALQSDWLPFELLASGGQKLSEDENLALNECGLVPSALLTFSWDMAVLEDIKAAGAEPDSILKPELLSAIEKLL</sequence>
<gene>
    <name evidence="19" type="primary">UBXN6</name>
    <name evidence="15 19" type="synonym">UBXD1</name>
    <name type="synonym">UBXDC2</name>
</gene>
<proteinExistence type="evidence at protein level"/>
<reference key="1">
    <citation type="journal article" date="2001" name="Biochim. Biophys. Acta">
        <title>Identification and characterization of UBXD1, a novel UBX domain-containing gene on human chromosome 19p13, and its mouse ortholog.</title>
        <authorList>
            <person name="Carim-Todd L."/>
            <person name="Escarceller M."/>
            <person name="Estivill X."/>
            <person name="Sumoy L."/>
        </authorList>
    </citation>
    <scope>NUCLEOTIDE SEQUENCE [MRNA] (ISOFORMS 1 AND 2)</scope>
</reference>
<reference key="2">
    <citation type="submission" date="2005-09" db="EMBL/GenBank/DDBJ databases">
        <authorList>
            <person name="Mural R.J."/>
            <person name="Istrail S."/>
            <person name="Sutton G.G."/>
            <person name="Florea L."/>
            <person name="Halpern A.L."/>
            <person name="Mobarry C.M."/>
            <person name="Lippert R."/>
            <person name="Walenz B."/>
            <person name="Shatkay H."/>
            <person name="Dew I."/>
            <person name="Miller J.R."/>
            <person name="Flanigan M.J."/>
            <person name="Edwards N.J."/>
            <person name="Bolanos R."/>
            <person name="Fasulo D."/>
            <person name="Halldorsson B.V."/>
            <person name="Hannenhalli S."/>
            <person name="Turner R."/>
            <person name="Yooseph S."/>
            <person name="Lu F."/>
            <person name="Nusskern D.R."/>
            <person name="Shue B.C."/>
            <person name="Zheng X.H."/>
            <person name="Zhong F."/>
            <person name="Delcher A.L."/>
            <person name="Huson D.H."/>
            <person name="Kravitz S.A."/>
            <person name="Mouchard L."/>
            <person name="Reinert K."/>
            <person name="Remington K.A."/>
            <person name="Clark A.G."/>
            <person name="Waterman M.S."/>
            <person name="Eichler E.E."/>
            <person name="Adams M.D."/>
            <person name="Hunkapiller M.W."/>
            <person name="Myers E.W."/>
            <person name="Venter J.C."/>
        </authorList>
    </citation>
    <scope>NUCLEOTIDE SEQUENCE [LARGE SCALE GENOMIC DNA]</scope>
</reference>
<reference key="3">
    <citation type="journal article" date="2004" name="Genome Res.">
        <title>The status, quality, and expansion of the NIH full-length cDNA project: the Mammalian Gene Collection (MGC).</title>
        <authorList>
            <consortium name="The MGC Project Team"/>
        </authorList>
    </citation>
    <scope>NUCLEOTIDE SEQUENCE [LARGE SCALE MRNA] (ISOFORM 2)</scope>
    <source>
        <tissue>Skin</tissue>
        <tissue>Uterus</tissue>
    </source>
</reference>
<reference key="4">
    <citation type="journal article" date="2008" name="Int. J. Biochem. Cell Biol.">
        <title>Ubxd1 is a novel co-factor of the human p97 ATPase.</title>
        <authorList>
            <person name="Madsen L."/>
            <person name="Andersen K.M."/>
            <person name="Prag S."/>
            <person name="Moos T."/>
            <person name="Semple C.A."/>
            <person name="Seeger M."/>
            <person name="Hartmann-Petersen R."/>
        </authorList>
    </citation>
    <scope>INTERACTION WITH VCP; SYVN1 AND HERPUD1</scope>
    <scope>SUBCELLULAR LOCATION</scope>
</reference>
<reference key="5">
    <citation type="journal article" date="2008" name="Proc. Natl. Acad. Sci. U.S.A.">
        <title>A quantitative atlas of mitotic phosphorylation.</title>
        <authorList>
            <person name="Dephoure N."/>
            <person name="Zhou C."/>
            <person name="Villen J."/>
            <person name="Beausoleil S.A."/>
            <person name="Bakalarski C.E."/>
            <person name="Elledge S.J."/>
            <person name="Gygi S.P."/>
        </authorList>
    </citation>
    <scope>PHOSPHORYLATION [LARGE SCALE ANALYSIS] AT SER-96</scope>
    <scope>IDENTIFICATION BY MASS SPECTROMETRY [LARGE SCALE ANALYSIS]</scope>
    <source>
        <tissue>Cervix carcinoma</tissue>
    </source>
</reference>
<reference key="6">
    <citation type="journal article" date="2009" name="Biochem. Biophys. Res. Commun.">
        <title>UBXD1 binds p97 through two independent binding sites.</title>
        <authorList>
            <person name="Kern M."/>
            <person name="Fernandez-Saiz V."/>
            <person name="Schaefer Z."/>
            <person name="Buchberger A."/>
        </authorList>
    </citation>
    <scope>INTERACTION WITH VCP</scope>
</reference>
<reference key="7">
    <citation type="journal article" date="2009" name="Biochem. Biophys. Res. Commun.">
        <title>UBXD1 is a VCP-interacting protein that is involved in ER-associated degradation.</title>
        <authorList>
            <person name="Nagahama M."/>
            <person name="Ohnishi M."/>
            <person name="Kawate Y."/>
            <person name="Matsui T."/>
            <person name="Miyake H."/>
            <person name="Yuasa K."/>
            <person name="Tani K."/>
            <person name="Tagaya M."/>
            <person name="Tsuji A."/>
        </authorList>
    </citation>
    <scope>FUNCTION</scope>
    <scope>INTERACTION WITH VCP AND DERL1</scope>
    <scope>SUBCELLULAR LOCATION</scope>
    <scope>TOPOLOGY</scope>
</reference>
<reference key="8">
    <citation type="journal article" date="2011" name="BMC Syst. Biol.">
        <title>Initial characterization of the human central proteome.</title>
        <authorList>
            <person name="Burkard T.R."/>
            <person name="Planyavsky M."/>
            <person name="Kaupe I."/>
            <person name="Breitwieser F.P."/>
            <person name="Buerckstuemmer T."/>
            <person name="Bennett K.L."/>
            <person name="Superti-Furga G."/>
            <person name="Colinge J."/>
        </authorList>
    </citation>
    <scope>IDENTIFICATION BY MASS SPECTROMETRY [LARGE SCALE ANALYSIS]</scope>
</reference>
<reference key="9">
    <citation type="journal article" date="2011" name="J. Biol. Chem.">
        <title>The general definition of the p97/valosin-containing protein (VCP)-interacting motif (VIM) delineates a new family of p97 cofactors.</title>
        <authorList>
            <person name="Stapf C."/>
            <person name="Cartwright E."/>
            <person name="Bycroft M."/>
            <person name="Hofmann K."/>
            <person name="Buchberger A."/>
        </authorList>
    </citation>
    <scope>INTERACTION WITH VCP</scope>
    <scope>VIM MOTIF</scope>
</reference>
<reference key="10">
    <citation type="journal article" date="2011" name="Nat. Cell Biol.">
        <title>Endolysosomal sorting of ubiquitylated caveolin-1 is regulated by VCP and UBXD1 and impaired by VCP disease mutations.</title>
        <authorList>
            <person name="Ritz D."/>
            <person name="Vuk M."/>
            <person name="Kirchner P."/>
            <person name="Bug M."/>
            <person name="Schuetz S."/>
            <person name="Hayer A."/>
            <person name="Bremer S."/>
            <person name="Lusk C."/>
            <person name="Baloh R.H."/>
            <person name="Lee H."/>
            <person name="Glatter T."/>
            <person name="Gstaiger M."/>
            <person name="Aebersold R."/>
            <person name="Weihl C.C."/>
            <person name="Meyer H."/>
        </authorList>
    </citation>
    <scope>FUNCTION</scope>
    <scope>INTERACTION WITH VCP AND CAV1</scope>
    <scope>SUBCELLULAR LOCATION</scope>
</reference>
<reference key="11">
    <citation type="journal article" date="2012" name="Mol. Cell. Proteomics">
        <title>Protein interaction profiling of the p97 adaptor UBXD1 points to a role for the complex in modulating ERGIC-53 trafficking.</title>
        <authorList>
            <person name="Haines D.S."/>
            <person name="Lee J.E."/>
            <person name="Beauparlant S.L."/>
            <person name="Kyle D.B."/>
            <person name="den Besten W."/>
            <person name="Sweredoski M.J."/>
            <person name="Graham R.L."/>
            <person name="Hess S."/>
            <person name="Deshaies R.J."/>
        </authorList>
    </citation>
    <scope>INTERACTION WITH LMAN1 AND RAB3GAP1</scope>
    <scope>REGION</scope>
</reference>
<reference key="12">
    <citation type="journal article" date="2013" name="J. Biol. Chem.">
        <title>Ubiquitination of the N-terminal region of caveolin-1 regulates endosomal sorting by the VCP/p97 AAA-ATPase.</title>
        <authorList>
            <person name="Kirchner P."/>
            <person name="Bug M."/>
            <person name="Meyer H."/>
        </authorList>
    </citation>
    <scope>FUNCTION</scope>
</reference>
<reference key="13">
    <citation type="journal article" date="2013" name="PLoS Genet.">
        <title>A newly uncovered group of distantly related lysine methyltransferases preferentially interact with molecular chaperones to regulate their activity.</title>
        <authorList>
            <person name="Cloutier P."/>
            <person name="Lavallee-Adam M."/>
            <person name="Faubert D."/>
            <person name="Blanchette M."/>
            <person name="Coulombe B."/>
        </authorList>
    </citation>
    <scope>INTERACTION WITH VCPKMT</scope>
</reference>
<reference key="14">
    <citation type="journal article" date="2014" name="J. Proteomics">
        <title>An enzyme assisted RP-RPLC approach for in-depth analysis of human liver phosphoproteome.</title>
        <authorList>
            <person name="Bian Y."/>
            <person name="Song C."/>
            <person name="Cheng K."/>
            <person name="Dong M."/>
            <person name="Wang F."/>
            <person name="Huang J."/>
            <person name="Sun D."/>
            <person name="Wang L."/>
            <person name="Ye M."/>
            <person name="Zou H."/>
        </authorList>
    </citation>
    <scope>IDENTIFICATION BY MASS SPECTROMETRY [LARGE SCALE ANALYSIS]</scope>
    <source>
        <tissue>Liver</tissue>
    </source>
</reference>
<reference key="15">
    <citation type="journal article" date="2015" name="J. Biol. Chem.">
        <title>The N-terminal Region of the Ubiquitin Regulatory X (UBX) Domain-containing protein 1 (UBXD1) modulates interdomain communication within the valosin-containing protein p97.</title>
        <authorList>
            <person name="Trusch F."/>
            <person name="Matena A."/>
            <person name="Vuk M."/>
            <person name="Koerver L."/>
            <person name="Knaevelsrud H."/>
            <person name="Freemont P.S."/>
            <person name="Meyer H."/>
            <person name="Bayer P."/>
        </authorList>
    </citation>
    <scope>FUNCTION</scope>
    <scope>INTERACTION WITH VCP</scope>
</reference>
<reference key="16">
    <citation type="journal article" date="2017" name="EMBO J.">
        <title>VCP/p97 cooperates with YOD1, UBXD1 and PLAA to drive clearance of ruptured lysosomes by autophagy.</title>
        <authorList>
            <person name="Papadopoulos C."/>
            <person name="Kirchner P."/>
            <person name="Bug M."/>
            <person name="Grum D."/>
            <person name="Koerver L."/>
            <person name="Schulze N."/>
            <person name="Poehler R."/>
            <person name="Dressler A."/>
            <person name="Fengler S."/>
            <person name="Arhzaouy K."/>
            <person name="Lux V."/>
            <person name="Ehrmann M."/>
            <person name="Weihl C.C."/>
            <person name="Meyer H."/>
        </authorList>
    </citation>
    <scope>FUNCTION</scope>
    <scope>INTERACTION WITH PLAA; VCP AND YOD1</scope>
    <scope>SUBCELLULAR LOCATION</scope>
</reference>
<reference key="17">
    <citation type="journal article" date="2023" name="Life. Sci Alliance">
        <title>N-terminal proteoforms may engage in different protein complexes.</title>
        <authorList>
            <person name="Bogaert A."/>
            <person name="Fijalkowska D."/>
            <person name="Staes A."/>
            <person name="Van de Steene T."/>
            <person name="Vuylsteke M."/>
            <person name="Stadler C."/>
            <person name="Eyckerman S."/>
            <person name="Spirohn K."/>
            <person name="Hao T."/>
            <person name="Calderwood M.A."/>
            <person name="Gevaert K."/>
        </authorList>
    </citation>
    <scope>CLEAVAGE OF INITIATOR METHIONINE (ISOFORM 2)</scope>
    <scope>ACETYLATION AT ALA-2 (ISOFORM 2)</scope>
</reference>
<protein>
    <recommendedName>
        <fullName evidence="17">UBX domain-containing protein 6</fullName>
    </recommendedName>
    <alternativeName>
        <fullName evidence="15">UBX domain-containing protein 1</fullName>
    </alternativeName>
</protein>
<evidence type="ECO:0000255" key="1"/>
<evidence type="ECO:0000255" key="2">
    <source>
        <dbReference type="PROSITE-ProRule" id="PRU00215"/>
    </source>
</evidence>
<evidence type="ECO:0000256" key="3">
    <source>
        <dbReference type="SAM" id="MobiDB-lite"/>
    </source>
</evidence>
<evidence type="ECO:0000269" key="4">
    <source>
    </source>
</evidence>
<evidence type="ECO:0000269" key="5">
    <source>
    </source>
</evidence>
<evidence type="ECO:0000269" key="6">
    <source>
    </source>
</evidence>
<evidence type="ECO:0000269" key="7">
    <source>
    </source>
</evidence>
<evidence type="ECO:0000269" key="8">
    <source>
    </source>
</evidence>
<evidence type="ECO:0000269" key="9">
    <source>
    </source>
</evidence>
<evidence type="ECO:0000269" key="10">
    <source>
    </source>
</evidence>
<evidence type="ECO:0000269" key="11">
    <source>
    </source>
</evidence>
<evidence type="ECO:0000269" key="12">
    <source>
    </source>
</evidence>
<evidence type="ECO:0000269" key="13">
    <source>
    </source>
</evidence>
<evidence type="ECO:0000269" key="14">
    <source>
    </source>
</evidence>
<evidence type="ECO:0000303" key="15">
    <source>
    </source>
</evidence>
<evidence type="ECO:0000303" key="16">
    <source>
    </source>
</evidence>
<evidence type="ECO:0000305" key="17"/>
<evidence type="ECO:0000305" key="18">
    <source>
    </source>
</evidence>
<evidence type="ECO:0000312" key="19">
    <source>
        <dbReference type="HGNC" id="HGNC:14928"/>
    </source>
</evidence>
<evidence type="ECO:0007744" key="20">
    <source>
    </source>
</evidence>
<evidence type="ECO:0007829" key="21">
    <source>
        <dbReference type="PDB" id="8FCM"/>
    </source>
</evidence>
<evidence type="ECO:0007829" key="22">
    <source>
        <dbReference type="PDB" id="8FCN"/>
    </source>
</evidence>
<evidence type="ECO:0007829" key="23">
    <source>
        <dbReference type="PDB" id="8FCO"/>
    </source>
</evidence>
<evidence type="ECO:0007829" key="24">
    <source>
        <dbReference type="PDB" id="8FCT"/>
    </source>
</evidence>
<organism>
    <name type="scientific">Homo sapiens</name>
    <name type="common">Human</name>
    <dbReference type="NCBI Taxonomy" id="9606"/>
    <lineage>
        <taxon>Eukaryota</taxon>
        <taxon>Metazoa</taxon>
        <taxon>Chordata</taxon>
        <taxon>Craniata</taxon>
        <taxon>Vertebrata</taxon>
        <taxon>Euteleostomi</taxon>
        <taxon>Mammalia</taxon>
        <taxon>Eutheria</taxon>
        <taxon>Euarchontoglires</taxon>
        <taxon>Primates</taxon>
        <taxon>Haplorrhini</taxon>
        <taxon>Catarrhini</taxon>
        <taxon>Hominidae</taxon>
        <taxon>Homo</taxon>
    </lineage>
</organism>
<comment type="function">
    <text evidence="6 7 10 12 13">May negatively regulate the ATPase activity of VCP, an ATP-driven segregase that associates with different cofactors to control a wide variety of cellular processes (PubMed:26475856). As a cofactor of VCP, it may play a role in the transport of CAV1 to lysosomes for degradation (PubMed:21822278, PubMed:23335559). It may also play a role in endoplasmic reticulum-associated degradation (ERAD) of misfolded proteins (PubMed:19275885). Together with VCP and other cofactors, it may play a role in macroautophagy, regulating for instance the clearance of damaged lysosomes (PubMed:27753622).</text>
</comment>
<comment type="subunit">
    <text evidence="4 5 6 7 8 9 11 12 13">Interacts with VCP through the PUB domain (via C-terminus) and VIM motif (via N-terminus); the interaction is direct (PubMed:18656546, PubMed:19174149, PubMed:21822278, PubMed:21896481, PubMed:26475856). Forms a ternary complex with CAV1 and VCP (PubMed:21822278). Interacts with SYVN1 (PubMed:18656546). Interacts with HERPUD1 (PubMed:18656546). Interacts with VCPKMT (PubMed:23349634). May interact with DERL1 (PubMed:19275885). Interacts with PLAA, VCP and YOD1; may form a complex involved in macroautophagy (PubMed:27753622). Interacts with LMAN1 (PubMed:22337587).</text>
</comment>
<comment type="interaction">
    <interactant intactId="EBI-1993899">
        <id>Q9BZV1</id>
    </interactant>
    <interactant intactId="EBI-724310">
        <id>Q15038</id>
        <label>DAZAP2</label>
    </interactant>
    <organismsDiffer>false</organismsDiffer>
    <experiments>5</experiments>
</comment>
<comment type="interaction">
    <interactant intactId="EBI-1993899">
        <id>Q9BZV1</id>
    </interactant>
    <interactant intactId="EBI-11978259">
        <id>Q92567-2</id>
        <label>FAM168A</label>
    </interactant>
    <organismsDiffer>false</organismsDiffer>
    <experiments>3</experiments>
</comment>
<comment type="interaction">
    <interactant intactId="EBI-1993899">
        <id>Q9BZV1</id>
    </interactant>
    <interactant intactId="EBI-743122">
        <id>P43358</id>
        <label>MAGEA4</label>
    </interactant>
    <organismsDiffer>false</organismsDiffer>
    <experiments>4</experiments>
</comment>
<comment type="interaction">
    <interactant intactId="EBI-1993899">
        <id>Q9BZV1</id>
    </interactant>
    <interactant intactId="EBI-10194128">
        <id>Q1RN33</id>
        <label>MAGEA4</label>
    </interactant>
    <organismsDiffer>false</organismsDiffer>
    <experiments>3</experiments>
</comment>
<comment type="interaction">
    <interactant intactId="EBI-1993899">
        <id>Q9BZV1</id>
    </interactant>
    <interactant intactId="EBI-373552">
        <id>Q96CS7</id>
        <label>PLEKHB2</label>
    </interactant>
    <organismsDiffer>false</organismsDiffer>
    <experiments>5</experiments>
</comment>
<comment type="interaction">
    <interactant intactId="EBI-1993899">
        <id>Q9BZV1</id>
    </interactant>
    <interactant intactId="EBI-2866213">
        <id>Q92537</id>
        <label>SUSD6</label>
    </interactant>
    <organismsDiffer>false</organismsDiffer>
    <experiments>3</experiments>
</comment>
<comment type="interaction">
    <interactant intactId="EBI-1993899">
        <id>Q9BZV1</id>
    </interactant>
    <interactant intactId="EBI-2513231">
        <id>Q8NHG7</id>
        <label>SVIP</label>
    </interactant>
    <organismsDiffer>false</organismsDiffer>
    <experiments>3</experiments>
</comment>
<comment type="interaction">
    <interactant intactId="EBI-1993899">
        <id>Q9BZV1</id>
    </interactant>
    <interactant intactId="EBI-739510">
        <id>Q9HCM9</id>
        <label>TRIM39</label>
    </interactant>
    <organismsDiffer>false</organismsDiffer>
    <experiments>5</experiments>
</comment>
<comment type="interaction">
    <interactant intactId="EBI-1993899">
        <id>Q9BZV1</id>
    </interactant>
    <interactant intactId="EBI-11523450">
        <id>Q9HCM9-2</id>
        <label>TRIM39</label>
    </interactant>
    <organismsDiffer>false</organismsDiffer>
    <experiments>3</experiments>
</comment>
<comment type="interaction">
    <interactant intactId="EBI-1993899">
        <id>Q9BZV1</id>
    </interactant>
    <interactant intactId="EBI-1993941">
        <id>Q96LJ8</id>
        <label>UBXN10</label>
    </interactant>
    <organismsDiffer>false</organismsDiffer>
    <experiments>3</experiments>
</comment>
<comment type="interaction">
    <interactant intactId="EBI-1993899">
        <id>Q9BZV1</id>
    </interactant>
    <interactant intactId="EBI-1993668">
        <id>P68543</id>
        <label>UBXN2A</label>
    </interactant>
    <organismsDiffer>false</organismsDiffer>
    <experiments>4</experiments>
</comment>
<comment type="interaction">
    <interactant intactId="EBI-1993899">
        <id>Q9BZV1</id>
    </interactant>
    <interactant intactId="EBI-1993619">
        <id>Q14CS0</id>
        <label>UBXN2B</label>
    </interactant>
    <organismsDiffer>false</organismsDiffer>
    <experiments>3</experiments>
</comment>
<comment type="interaction">
    <interactant intactId="EBI-1993899">
        <id>Q9BZV1</id>
    </interactant>
    <interactant intactId="EBI-355164">
        <id>P55072</id>
        <label>VCP</label>
    </interactant>
    <organismsDiffer>false</organismsDiffer>
    <experiments>23</experiments>
</comment>
<comment type="interaction">
    <interactant intactId="EBI-1993899">
        <id>Q9BZV1</id>
    </interactant>
    <interactant intactId="EBI-2510804">
        <id>Q5VVQ6</id>
        <label>YOD1</label>
    </interactant>
    <organismsDiffer>false</organismsDiffer>
    <experiments>3</experiments>
</comment>
<comment type="subcellular location">
    <subcellularLocation>
        <location evidence="4">Cytoplasm</location>
    </subcellularLocation>
    <subcellularLocation>
        <location evidence="6">Cytoplasm</location>
        <location evidence="6">Cytosol</location>
    </subcellularLocation>
    <subcellularLocation>
        <location evidence="6">Membrane</location>
        <topology evidence="6">Peripheral membrane protein</topology>
    </subcellularLocation>
    <subcellularLocation>
        <location evidence="4">Nucleus</location>
    </subcellularLocation>
    <subcellularLocation>
        <location evidence="4">Cytoplasm</location>
        <location evidence="4">Cytoskeleton</location>
        <location evidence="4">Microtubule organizing center</location>
        <location evidence="4">Centrosome</location>
    </subcellularLocation>
    <subcellularLocation>
        <location evidence="7">Early endosome membrane</location>
        <topology evidence="18">Peripheral membrane protein</topology>
    </subcellularLocation>
    <subcellularLocation>
        <location evidence="7">Late endosome membrane</location>
        <topology evidence="18">Peripheral membrane protein</topology>
    </subcellularLocation>
    <subcellularLocation>
        <location evidence="7 13">Lysosome membrane</location>
        <topology evidence="18">Peripheral membrane protein</topology>
    </subcellularLocation>
    <text evidence="4 7 13">Localizes at the centrosome both in interphase and during mitosis (PubMed:18656546). May be recruited to endosomal and lysosomal membranes as part of a ternary complex with CAV1 and VCP (PubMed:21822278). Recruited to damaged lysosomes decorated with K48-linked ubiquitin chains (PubMed:27753622).</text>
</comment>
<comment type="alternative products">
    <event type="alternative splicing"/>
    <isoform>
        <id>Q9BZV1-1</id>
        <name>1</name>
        <sequence type="displayed"/>
    </isoform>
    <isoform>
        <id>Q9BZV1-2</id>
        <name>2</name>
        <sequence type="described" ref="VSP_007453"/>
    </isoform>
</comment>
<comment type="tissue specificity">
    <text>Enhanced expression in testis.</text>
</comment>
<comment type="domain">
    <text evidence="8">The UBX domain lacks key residues critical for VCP binding.</text>
</comment>
<name>UBXN6_HUMAN</name>
<keyword id="KW-0002">3D-structure</keyword>
<keyword id="KW-0025">Alternative splicing</keyword>
<keyword id="KW-0963">Cytoplasm</keyword>
<keyword id="KW-0206">Cytoskeleton</keyword>
<keyword id="KW-0967">Endosome</keyword>
<keyword id="KW-0458">Lysosome</keyword>
<keyword id="KW-0472">Membrane</keyword>
<keyword id="KW-0539">Nucleus</keyword>
<keyword id="KW-0597">Phosphoprotein</keyword>
<keyword id="KW-1267">Proteomics identification</keyword>
<keyword id="KW-1185">Reference proteome</keyword>
<keyword id="KW-0833">Ubl conjugation pathway</keyword>
<dbReference type="EMBL" id="AF272893">
    <property type="protein sequence ID" value="AAK13257.1"/>
    <property type="molecule type" value="mRNA"/>
</dbReference>
<dbReference type="EMBL" id="AF272894">
    <property type="protein sequence ID" value="AAK13258.1"/>
    <property type="molecule type" value="mRNA"/>
</dbReference>
<dbReference type="EMBL" id="CH471139">
    <property type="protein sequence ID" value="EAW69219.1"/>
    <property type="molecule type" value="Genomic_DNA"/>
</dbReference>
<dbReference type="EMBL" id="CH471139">
    <property type="protein sequence ID" value="EAW69222.1"/>
    <property type="molecule type" value="Genomic_DNA"/>
</dbReference>
<dbReference type="EMBL" id="BC007414">
    <property type="protein sequence ID" value="AAH07414.2"/>
    <property type="molecule type" value="mRNA"/>
</dbReference>
<dbReference type="EMBL" id="BC008288">
    <property type="protein sequence ID" value="AAH08288.1"/>
    <property type="molecule type" value="mRNA"/>
</dbReference>
<dbReference type="EMBL" id="BC017113">
    <property type="protein sequence ID" value="AAH17113.1"/>
    <property type="molecule type" value="mRNA"/>
</dbReference>
<dbReference type="CCDS" id="CCDS12129.1">
    <molecule id="Q9BZV1-1"/>
</dbReference>
<dbReference type="CCDS" id="CCDS54201.1">
    <molecule id="Q9BZV1-2"/>
</dbReference>
<dbReference type="RefSeq" id="NP_001164562.1">
    <molecule id="Q9BZV1-2"/>
    <property type="nucleotide sequence ID" value="NM_001171091.2"/>
</dbReference>
<dbReference type="RefSeq" id="NP_079517.1">
    <molecule id="Q9BZV1-1"/>
    <property type="nucleotide sequence ID" value="NM_025241.3"/>
</dbReference>
<dbReference type="RefSeq" id="XP_016882814.2">
    <molecule id="Q9BZV1-2"/>
    <property type="nucleotide sequence ID" value="XM_017027325.2"/>
</dbReference>
<dbReference type="PDB" id="6SAP">
    <property type="method" value="NMR"/>
    <property type="chains" value="A=150-264"/>
</dbReference>
<dbReference type="PDB" id="8FCL">
    <property type="method" value="EM"/>
    <property type="resolution" value="3.51 A"/>
    <property type="chains" value="G=1-441"/>
</dbReference>
<dbReference type="PDB" id="8FCM">
    <property type="method" value="EM"/>
    <property type="resolution" value="3.27 A"/>
    <property type="chains" value="G=1-441"/>
</dbReference>
<dbReference type="PDB" id="8FCN">
    <property type="method" value="EM"/>
    <property type="resolution" value="2.95 A"/>
    <property type="chains" value="G/H/I/J/K/L=1-441"/>
</dbReference>
<dbReference type="PDB" id="8FCO">
    <property type="method" value="EM"/>
    <property type="resolution" value="3.31 A"/>
    <property type="chains" value="G/H=1-441"/>
</dbReference>
<dbReference type="PDB" id="8FCP">
    <property type="method" value="EM"/>
    <property type="resolution" value="3.52 A"/>
    <property type="chains" value="G/H=1-441"/>
</dbReference>
<dbReference type="PDB" id="8FCQ">
    <property type="method" value="EM"/>
    <property type="resolution" value="3.93 A"/>
    <property type="chains" value="G=1-441"/>
</dbReference>
<dbReference type="PDB" id="8FCR">
    <property type="method" value="EM"/>
    <property type="resolution" value="4.12 A"/>
    <property type="chains" value="G=1-441"/>
</dbReference>
<dbReference type="PDB" id="8FCT">
    <property type="method" value="EM"/>
    <property type="resolution" value="3.42 A"/>
    <property type="chains" value="G=1-441"/>
</dbReference>
<dbReference type="PDBsum" id="6SAP"/>
<dbReference type="PDBsum" id="8FCL"/>
<dbReference type="PDBsum" id="8FCM"/>
<dbReference type="PDBsum" id="8FCN"/>
<dbReference type="PDBsum" id="8FCO"/>
<dbReference type="PDBsum" id="8FCP"/>
<dbReference type="PDBsum" id="8FCQ"/>
<dbReference type="PDBsum" id="8FCR"/>
<dbReference type="PDBsum" id="8FCT"/>
<dbReference type="EMDB" id="EMD-28982"/>
<dbReference type="EMDB" id="EMD-28983"/>
<dbReference type="EMDB" id="EMD-28984"/>
<dbReference type="EMDB" id="EMD-28985"/>
<dbReference type="EMDB" id="EMD-28986"/>
<dbReference type="EMDB" id="EMD-28987"/>
<dbReference type="EMDB" id="EMD-28988"/>
<dbReference type="EMDB" id="EMD-28989"/>
<dbReference type="EMDB" id="EMD-28990"/>
<dbReference type="EMDB" id="EMD-28991"/>
<dbReference type="EMDB" id="EMD-28992"/>
<dbReference type="SMR" id="Q9BZV1"/>
<dbReference type="BioGRID" id="123263">
    <property type="interactions" value="368"/>
</dbReference>
<dbReference type="ComplexPortal" id="CPX-8133">
    <property type="entry name" value="VCP-UBXN6 AAA ATPase complex"/>
</dbReference>
<dbReference type="FunCoup" id="Q9BZV1">
    <property type="interactions" value="1584"/>
</dbReference>
<dbReference type="IntAct" id="Q9BZV1">
    <property type="interactions" value="263"/>
</dbReference>
<dbReference type="MINT" id="Q9BZV1"/>
<dbReference type="STRING" id="9606.ENSP00000301281"/>
<dbReference type="GlyGen" id="Q9BZV1">
    <property type="glycosylation" value="3 sites, 1 N-linked glycan (1 site), 1 O-linked glycan (1 site)"/>
</dbReference>
<dbReference type="iPTMnet" id="Q9BZV1"/>
<dbReference type="PhosphoSitePlus" id="Q9BZV1"/>
<dbReference type="BioMuta" id="UBXN6"/>
<dbReference type="DMDM" id="30913412"/>
<dbReference type="jPOST" id="Q9BZV1"/>
<dbReference type="MassIVE" id="Q9BZV1"/>
<dbReference type="PaxDb" id="9606-ENSP00000301281"/>
<dbReference type="PeptideAtlas" id="Q9BZV1"/>
<dbReference type="ProteomicsDB" id="79904">
    <molecule id="Q9BZV1-1"/>
</dbReference>
<dbReference type="ProteomicsDB" id="79905">
    <molecule id="Q9BZV1-2"/>
</dbReference>
<dbReference type="Pumba" id="Q9BZV1"/>
<dbReference type="Antibodypedia" id="42425">
    <property type="antibodies" value="174 antibodies from 25 providers"/>
</dbReference>
<dbReference type="DNASU" id="80700"/>
<dbReference type="Ensembl" id="ENST00000301281.11">
    <molecule id="Q9BZV1-1"/>
    <property type="protein sequence ID" value="ENSP00000301281.5"/>
    <property type="gene ID" value="ENSG00000167671.12"/>
</dbReference>
<dbReference type="Ensembl" id="ENST00000394765.7">
    <molecule id="Q9BZV1-2"/>
    <property type="protein sequence ID" value="ENSP00000378246.2"/>
    <property type="gene ID" value="ENSG00000167671.12"/>
</dbReference>
<dbReference type="GeneID" id="80700"/>
<dbReference type="KEGG" id="hsa:80700"/>
<dbReference type="MANE-Select" id="ENST00000301281.11">
    <property type="protein sequence ID" value="ENSP00000301281.5"/>
    <property type="RefSeq nucleotide sequence ID" value="NM_025241.3"/>
    <property type="RefSeq protein sequence ID" value="NP_079517.1"/>
</dbReference>
<dbReference type="UCSC" id="uc002mam.3">
    <molecule id="Q9BZV1-1"/>
    <property type="organism name" value="human"/>
</dbReference>
<dbReference type="AGR" id="HGNC:14928"/>
<dbReference type="CTD" id="80700"/>
<dbReference type="DisGeNET" id="80700"/>
<dbReference type="GeneCards" id="UBXN6"/>
<dbReference type="HGNC" id="HGNC:14928">
    <property type="gene designation" value="UBXN6"/>
</dbReference>
<dbReference type="HPA" id="ENSG00000167671">
    <property type="expression patterns" value="Low tissue specificity"/>
</dbReference>
<dbReference type="MIM" id="611946">
    <property type="type" value="gene"/>
</dbReference>
<dbReference type="neXtProt" id="NX_Q9BZV1"/>
<dbReference type="OpenTargets" id="ENSG00000167671"/>
<dbReference type="PharmGKB" id="PA162408446"/>
<dbReference type="VEuPathDB" id="HostDB:ENSG00000167671"/>
<dbReference type="eggNOG" id="KOG2699">
    <property type="taxonomic scope" value="Eukaryota"/>
</dbReference>
<dbReference type="GeneTree" id="ENSGT00940000157273"/>
<dbReference type="HOGENOM" id="CLU_033280_0_0_1"/>
<dbReference type="InParanoid" id="Q9BZV1"/>
<dbReference type="OMA" id="VFFRCPM"/>
<dbReference type="OrthoDB" id="49605at2759"/>
<dbReference type="PAN-GO" id="Q9BZV1">
    <property type="GO annotations" value="1 GO annotation based on evolutionary models"/>
</dbReference>
<dbReference type="PhylomeDB" id="Q9BZV1"/>
<dbReference type="TreeFam" id="TF314617"/>
<dbReference type="PathwayCommons" id="Q9BZV1"/>
<dbReference type="SignaLink" id="Q9BZV1"/>
<dbReference type="SIGNOR" id="Q9BZV1"/>
<dbReference type="BioGRID-ORCS" id="80700">
    <property type="hits" value="19 hits in 1166 CRISPR screens"/>
</dbReference>
<dbReference type="CD-CODE" id="8C2F96ED">
    <property type="entry name" value="Centrosome"/>
</dbReference>
<dbReference type="CD-CODE" id="FB4E32DD">
    <property type="entry name" value="Presynaptic clusters and postsynaptic densities"/>
</dbReference>
<dbReference type="ChiTaRS" id="UBXN6">
    <property type="organism name" value="human"/>
</dbReference>
<dbReference type="GeneWiki" id="UBXN6"/>
<dbReference type="GenomeRNAi" id="80700"/>
<dbReference type="Pharos" id="Q9BZV1">
    <property type="development level" value="Tbio"/>
</dbReference>
<dbReference type="PRO" id="PR:Q9BZV1"/>
<dbReference type="Proteomes" id="UP000005640">
    <property type="component" value="Chromosome 19"/>
</dbReference>
<dbReference type="RNAct" id="Q9BZV1">
    <property type="molecule type" value="protein"/>
</dbReference>
<dbReference type="Bgee" id="ENSG00000167671">
    <property type="expression patterns" value="Expressed in right testis and 198 other cell types or tissues"/>
</dbReference>
<dbReference type="ExpressionAtlas" id="Q9BZV1">
    <property type="expression patterns" value="baseline and differential"/>
</dbReference>
<dbReference type="GO" id="GO:0005813">
    <property type="term" value="C:centrosome"/>
    <property type="evidence" value="ECO:0007669"/>
    <property type="project" value="UniProtKB-SubCell"/>
</dbReference>
<dbReference type="GO" id="GO:0005737">
    <property type="term" value="C:cytoplasm"/>
    <property type="evidence" value="ECO:0000314"/>
    <property type="project" value="UniProtKB"/>
</dbReference>
<dbReference type="GO" id="GO:0005829">
    <property type="term" value="C:cytosol"/>
    <property type="evidence" value="ECO:0000314"/>
    <property type="project" value="UniProtKB"/>
</dbReference>
<dbReference type="GO" id="GO:0031901">
    <property type="term" value="C:early endosome membrane"/>
    <property type="evidence" value="ECO:0000314"/>
    <property type="project" value="UniProtKB"/>
</dbReference>
<dbReference type="GO" id="GO:0005768">
    <property type="term" value="C:endosome"/>
    <property type="evidence" value="ECO:0000314"/>
    <property type="project" value="CACAO"/>
</dbReference>
<dbReference type="GO" id="GO:0070062">
    <property type="term" value="C:extracellular exosome"/>
    <property type="evidence" value="ECO:0007005"/>
    <property type="project" value="UniProtKB"/>
</dbReference>
<dbReference type="GO" id="GO:0031902">
    <property type="term" value="C:late endosome membrane"/>
    <property type="evidence" value="ECO:0000314"/>
    <property type="project" value="UniProtKB"/>
</dbReference>
<dbReference type="GO" id="GO:0005765">
    <property type="term" value="C:lysosomal membrane"/>
    <property type="evidence" value="ECO:0000314"/>
    <property type="project" value="UniProtKB"/>
</dbReference>
<dbReference type="GO" id="GO:0016020">
    <property type="term" value="C:membrane"/>
    <property type="evidence" value="ECO:0000314"/>
    <property type="project" value="UniProtKB"/>
</dbReference>
<dbReference type="GO" id="GO:0005634">
    <property type="term" value="C:nucleus"/>
    <property type="evidence" value="ECO:0007669"/>
    <property type="project" value="UniProtKB-SubCell"/>
</dbReference>
<dbReference type="GO" id="GO:0032991">
    <property type="term" value="C:protein-containing complex"/>
    <property type="evidence" value="ECO:0000314"/>
    <property type="project" value="UniProtKB"/>
</dbReference>
<dbReference type="GO" id="GO:0051117">
    <property type="term" value="F:ATPase binding"/>
    <property type="evidence" value="ECO:0000315"/>
    <property type="project" value="DisProt"/>
</dbReference>
<dbReference type="GO" id="GO:0032510">
    <property type="term" value="P:endosome to lysosome transport via multivesicular body sorting pathway"/>
    <property type="evidence" value="ECO:0000315"/>
    <property type="project" value="UniProtKB"/>
</dbReference>
<dbReference type="GO" id="GO:0036503">
    <property type="term" value="P:ERAD pathway"/>
    <property type="evidence" value="ECO:0000315"/>
    <property type="project" value="UniProtKB"/>
</dbReference>
<dbReference type="GO" id="GO:0016236">
    <property type="term" value="P:macroautophagy"/>
    <property type="evidence" value="ECO:0000315"/>
    <property type="project" value="UniProtKB"/>
</dbReference>
<dbReference type="CDD" id="cd10460">
    <property type="entry name" value="PUB_UBXD1"/>
    <property type="match status" value="1"/>
</dbReference>
<dbReference type="CDD" id="cd16119">
    <property type="entry name" value="UBX_UBXN6"/>
    <property type="match status" value="1"/>
</dbReference>
<dbReference type="FunFam" id="3.10.20.90:FF:000185">
    <property type="entry name" value="UBX domain-containing protein 6"/>
    <property type="match status" value="1"/>
</dbReference>
<dbReference type="FunFam" id="1.20.58.2190:FF:000003">
    <property type="entry name" value="UBX domain-containing protein 6 isoform 1"/>
    <property type="match status" value="1"/>
</dbReference>
<dbReference type="Gene3D" id="1.20.58.2190">
    <property type="match status" value="1"/>
</dbReference>
<dbReference type="Gene3D" id="3.10.20.90">
    <property type="entry name" value="Phosphatidylinositol 3-kinase Catalytic Subunit, Chain A, domain 1"/>
    <property type="match status" value="1"/>
</dbReference>
<dbReference type="InterPro" id="IPR036339">
    <property type="entry name" value="PUB-like_dom_sf"/>
</dbReference>
<dbReference type="InterPro" id="IPR018997">
    <property type="entry name" value="PUB_domain"/>
</dbReference>
<dbReference type="InterPro" id="IPR029071">
    <property type="entry name" value="Ubiquitin-like_domsf"/>
</dbReference>
<dbReference type="InterPro" id="IPR001012">
    <property type="entry name" value="UBX_dom"/>
</dbReference>
<dbReference type="InterPro" id="IPR042774">
    <property type="entry name" value="UBXN6_PUB"/>
</dbReference>
<dbReference type="PANTHER" id="PTHR23153:SF38">
    <property type="entry name" value="UBX DOMAIN-CONTAINING PROTEIN 6"/>
    <property type="match status" value="1"/>
</dbReference>
<dbReference type="PANTHER" id="PTHR23153">
    <property type="entry name" value="UBX-RELATED"/>
    <property type="match status" value="1"/>
</dbReference>
<dbReference type="Pfam" id="PF09409">
    <property type="entry name" value="PUB"/>
    <property type="match status" value="1"/>
</dbReference>
<dbReference type="Pfam" id="PF00789">
    <property type="entry name" value="UBX"/>
    <property type="match status" value="1"/>
</dbReference>
<dbReference type="SMART" id="SM00580">
    <property type="entry name" value="PUG"/>
    <property type="match status" value="1"/>
</dbReference>
<dbReference type="SMART" id="SM00166">
    <property type="entry name" value="UBX"/>
    <property type="match status" value="1"/>
</dbReference>
<dbReference type="SUPFAM" id="SSF143503">
    <property type="entry name" value="PUG domain-like"/>
    <property type="match status" value="1"/>
</dbReference>
<dbReference type="SUPFAM" id="SSF54236">
    <property type="entry name" value="Ubiquitin-like"/>
    <property type="match status" value="1"/>
</dbReference>
<dbReference type="PROSITE" id="PS50033">
    <property type="entry name" value="UBX"/>
    <property type="match status" value="1"/>
</dbReference>
<accession>Q9BZV1</accession>
<accession>D6W626</accession>
<accession>Q96AH1</accession>
<accession>Q96IK9</accession>
<accession>Q9BZV0</accession>